<feature type="chain" id="PRO_0000258577" description="Small ribosomal subunit protein uS10">
    <location>
        <begin position="1"/>
        <end position="102"/>
    </location>
</feature>
<sequence length="102" mass="11614">MANKKIRIRLKAYEHRTLDTAAEKIVETATRTGATVAGPVPLPTERSLYTIIRATHKYKDSREQFEMRTHKRLVDIINPTQKTVDALMKLDLPSGVNVEIKL</sequence>
<keyword id="KW-0687">Ribonucleoprotein</keyword>
<keyword id="KW-0689">Ribosomal protein</keyword>
<organism>
    <name type="scientific">Streptococcus pyogenes serotype M2 (strain MGAS10270)</name>
    <dbReference type="NCBI Taxonomy" id="370552"/>
    <lineage>
        <taxon>Bacteria</taxon>
        <taxon>Bacillati</taxon>
        <taxon>Bacillota</taxon>
        <taxon>Bacilli</taxon>
        <taxon>Lactobacillales</taxon>
        <taxon>Streptococcaceae</taxon>
        <taxon>Streptococcus</taxon>
    </lineage>
</organism>
<proteinExistence type="inferred from homology"/>
<comment type="function">
    <text evidence="1">Involved in the binding of tRNA to the ribosomes.</text>
</comment>
<comment type="subunit">
    <text evidence="1">Part of the 30S ribosomal subunit.</text>
</comment>
<comment type="similarity">
    <text evidence="1">Belongs to the universal ribosomal protein uS10 family.</text>
</comment>
<accession>Q1JJ63</accession>
<protein>
    <recommendedName>
        <fullName evidence="1">Small ribosomal subunit protein uS10</fullName>
    </recommendedName>
    <alternativeName>
        <fullName evidence="2">30S ribosomal protein S10</fullName>
    </alternativeName>
</protein>
<dbReference type="EMBL" id="CP000260">
    <property type="protein sequence ID" value="ABF33110.1"/>
    <property type="molecule type" value="Genomic_DNA"/>
</dbReference>
<dbReference type="RefSeq" id="WP_001284518.1">
    <property type="nucleotide sequence ID" value="NZ_CVUH01000001.1"/>
</dbReference>
<dbReference type="SMR" id="Q1JJ63"/>
<dbReference type="GeneID" id="69900025"/>
<dbReference type="KEGG" id="sph:MGAS10270_Spy0045"/>
<dbReference type="HOGENOM" id="CLU_122625_1_3_9"/>
<dbReference type="Proteomes" id="UP000002436">
    <property type="component" value="Chromosome"/>
</dbReference>
<dbReference type="GO" id="GO:1990904">
    <property type="term" value="C:ribonucleoprotein complex"/>
    <property type="evidence" value="ECO:0007669"/>
    <property type="project" value="UniProtKB-KW"/>
</dbReference>
<dbReference type="GO" id="GO:0005840">
    <property type="term" value="C:ribosome"/>
    <property type="evidence" value="ECO:0007669"/>
    <property type="project" value="UniProtKB-KW"/>
</dbReference>
<dbReference type="GO" id="GO:0003735">
    <property type="term" value="F:structural constituent of ribosome"/>
    <property type="evidence" value="ECO:0007669"/>
    <property type="project" value="InterPro"/>
</dbReference>
<dbReference type="GO" id="GO:0000049">
    <property type="term" value="F:tRNA binding"/>
    <property type="evidence" value="ECO:0007669"/>
    <property type="project" value="UniProtKB-UniRule"/>
</dbReference>
<dbReference type="GO" id="GO:0006412">
    <property type="term" value="P:translation"/>
    <property type="evidence" value="ECO:0007669"/>
    <property type="project" value="UniProtKB-UniRule"/>
</dbReference>
<dbReference type="FunFam" id="3.30.70.600:FF:000001">
    <property type="entry name" value="30S ribosomal protein S10"/>
    <property type="match status" value="1"/>
</dbReference>
<dbReference type="Gene3D" id="3.30.70.600">
    <property type="entry name" value="Ribosomal protein S10 domain"/>
    <property type="match status" value="1"/>
</dbReference>
<dbReference type="HAMAP" id="MF_00508">
    <property type="entry name" value="Ribosomal_uS10"/>
    <property type="match status" value="1"/>
</dbReference>
<dbReference type="InterPro" id="IPR001848">
    <property type="entry name" value="Ribosomal_uS10"/>
</dbReference>
<dbReference type="InterPro" id="IPR018268">
    <property type="entry name" value="Ribosomal_uS10_CS"/>
</dbReference>
<dbReference type="InterPro" id="IPR027486">
    <property type="entry name" value="Ribosomal_uS10_dom"/>
</dbReference>
<dbReference type="InterPro" id="IPR036838">
    <property type="entry name" value="Ribosomal_uS10_dom_sf"/>
</dbReference>
<dbReference type="NCBIfam" id="NF001861">
    <property type="entry name" value="PRK00596.1"/>
    <property type="match status" value="1"/>
</dbReference>
<dbReference type="NCBIfam" id="TIGR01049">
    <property type="entry name" value="rpsJ_bact"/>
    <property type="match status" value="1"/>
</dbReference>
<dbReference type="PANTHER" id="PTHR11700">
    <property type="entry name" value="30S RIBOSOMAL PROTEIN S10 FAMILY MEMBER"/>
    <property type="match status" value="1"/>
</dbReference>
<dbReference type="Pfam" id="PF00338">
    <property type="entry name" value="Ribosomal_S10"/>
    <property type="match status" value="1"/>
</dbReference>
<dbReference type="PRINTS" id="PR00971">
    <property type="entry name" value="RIBOSOMALS10"/>
</dbReference>
<dbReference type="SMART" id="SM01403">
    <property type="entry name" value="Ribosomal_S10"/>
    <property type="match status" value="1"/>
</dbReference>
<dbReference type="SUPFAM" id="SSF54999">
    <property type="entry name" value="Ribosomal protein S10"/>
    <property type="match status" value="1"/>
</dbReference>
<dbReference type="PROSITE" id="PS00361">
    <property type="entry name" value="RIBOSOMAL_S10"/>
    <property type="match status" value="1"/>
</dbReference>
<evidence type="ECO:0000255" key="1">
    <source>
        <dbReference type="HAMAP-Rule" id="MF_00508"/>
    </source>
</evidence>
<evidence type="ECO:0000305" key="2"/>
<gene>
    <name evidence="1" type="primary">rpsJ</name>
    <name type="ordered locus">MGAS10270_Spy0045</name>
</gene>
<name>RS10_STRPD</name>
<reference key="1">
    <citation type="journal article" date="2006" name="Proc. Natl. Acad. Sci. U.S.A.">
        <title>Molecular genetic anatomy of inter- and intraserotype variation in the human bacterial pathogen group A Streptococcus.</title>
        <authorList>
            <person name="Beres S.B."/>
            <person name="Richter E.W."/>
            <person name="Nagiec M.J."/>
            <person name="Sumby P."/>
            <person name="Porcella S.F."/>
            <person name="DeLeo F.R."/>
            <person name="Musser J.M."/>
        </authorList>
    </citation>
    <scope>NUCLEOTIDE SEQUENCE [LARGE SCALE GENOMIC DNA]</scope>
    <source>
        <strain>MGAS10270</strain>
    </source>
</reference>